<protein>
    <recommendedName>
        <fullName>Probable tautomerase YusQ</fullName>
        <ecNumber>5.3.2.-</ecNumber>
    </recommendedName>
</protein>
<gene>
    <name type="primary">yusQ</name>
    <name type="ordered locus">BSU32890</name>
</gene>
<name>YUSQ_BACSU</name>
<feature type="initiator methionine" description="Removed" evidence="1">
    <location>
        <position position="1"/>
    </location>
</feature>
<feature type="chain" id="PRO_0000360797" description="Probable tautomerase YusQ">
    <location>
        <begin position="2"/>
        <end position="127"/>
    </location>
</feature>
<feature type="active site" description="Proton acceptor; via imino nitrogen" evidence="1">
    <location>
        <position position="2"/>
    </location>
</feature>
<dbReference type="EC" id="5.3.2.-"/>
<dbReference type="EMBL" id="AL009126">
    <property type="protein sequence ID" value="CAB15278.1"/>
    <property type="molecule type" value="Genomic_DNA"/>
</dbReference>
<dbReference type="PIR" id="B70022">
    <property type="entry name" value="B70022"/>
</dbReference>
<dbReference type="RefSeq" id="NP_391168.1">
    <property type="nucleotide sequence ID" value="NC_000964.3"/>
</dbReference>
<dbReference type="RefSeq" id="WP_009968136.1">
    <property type="nucleotide sequence ID" value="NZ_OZ025638.1"/>
</dbReference>
<dbReference type="SMR" id="O32183"/>
<dbReference type="FunCoup" id="O32183">
    <property type="interactions" value="94"/>
</dbReference>
<dbReference type="STRING" id="224308.BSU32890"/>
<dbReference type="PaxDb" id="224308-BSU32890"/>
<dbReference type="EnsemblBacteria" id="CAB15278">
    <property type="protein sequence ID" value="CAB15278"/>
    <property type="gene ID" value="BSU_32890"/>
</dbReference>
<dbReference type="GeneID" id="938468"/>
<dbReference type="KEGG" id="bsu:BSU32890"/>
<dbReference type="PATRIC" id="fig|224308.179.peg.3565"/>
<dbReference type="eggNOG" id="COG1942">
    <property type="taxonomic scope" value="Bacteria"/>
</dbReference>
<dbReference type="InParanoid" id="O32183"/>
<dbReference type="OrthoDB" id="9804765at2"/>
<dbReference type="PhylomeDB" id="O32183"/>
<dbReference type="BioCyc" id="BSUB:BSU32890-MONOMER"/>
<dbReference type="Proteomes" id="UP000001570">
    <property type="component" value="Chromosome"/>
</dbReference>
<dbReference type="GO" id="GO:0016853">
    <property type="term" value="F:isomerase activity"/>
    <property type="evidence" value="ECO:0007669"/>
    <property type="project" value="UniProtKB-KW"/>
</dbReference>
<dbReference type="Gene3D" id="3.30.429.10">
    <property type="entry name" value="Macrophage Migration Inhibitory Factor"/>
    <property type="match status" value="1"/>
</dbReference>
<dbReference type="InterPro" id="IPR037479">
    <property type="entry name" value="Tauto_MSAD"/>
</dbReference>
<dbReference type="InterPro" id="IPR014347">
    <property type="entry name" value="Tautomerase/MIF_sf"/>
</dbReference>
<dbReference type="PANTHER" id="PTHR38460">
    <property type="entry name" value="TAUTOMERASE YOLI-RELATED"/>
    <property type="match status" value="1"/>
</dbReference>
<dbReference type="PANTHER" id="PTHR38460:SF1">
    <property type="entry name" value="TAUTOMERASE YOLI-RELATED"/>
    <property type="match status" value="1"/>
</dbReference>
<dbReference type="Pfam" id="PF14552">
    <property type="entry name" value="Tautomerase_2"/>
    <property type="match status" value="1"/>
</dbReference>
<dbReference type="SUPFAM" id="SSF55331">
    <property type="entry name" value="Tautomerase/MIF"/>
    <property type="match status" value="1"/>
</dbReference>
<keyword id="KW-0413">Isomerase</keyword>
<keyword id="KW-1185">Reference proteome</keyword>
<comment type="similarity">
    <text evidence="2">Belongs to the 4-oxalocrotonate tautomerase family.</text>
</comment>
<proteinExistence type="inferred from homology"/>
<organism>
    <name type="scientific">Bacillus subtilis (strain 168)</name>
    <dbReference type="NCBI Taxonomy" id="224308"/>
    <lineage>
        <taxon>Bacteria</taxon>
        <taxon>Bacillati</taxon>
        <taxon>Bacillota</taxon>
        <taxon>Bacilli</taxon>
        <taxon>Bacillales</taxon>
        <taxon>Bacillaceae</taxon>
        <taxon>Bacillus</taxon>
    </lineage>
</organism>
<sequence length="127" mass="15253">MPFVQIHLRSGRSEVWLQKLSRTIHQSMIEEINVPEDDYFQVIRQYEKSEFFYDPFYLQVERTDELIYIHFTLKQSRTTEQKKALYRSIASRIHSELGVRKEDVFIMLAGNQDEDWSFGNGRAQMIE</sequence>
<evidence type="ECO:0000250" key="1"/>
<evidence type="ECO:0000305" key="2"/>
<accession>O32183</accession>
<reference key="1">
    <citation type="journal article" date="1997" name="Nature">
        <title>The complete genome sequence of the Gram-positive bacterium Bacillus subtilis.</title>
        <authorList>
            <person name="Kunst F."/>
            <person name="Ogasawara N."/>
            <person name="Moszer I."/>
            <person name="Albertini A.M."/>
            <person name="Alloni G."/>
            <person name="Azevedo V."/>
            <person name="Bertero M.G."/>
            <person name="Bessieres P."/>
            <person name="Bolotin A."/>
            <person name="Borchert S."/>
            <person name="Borriss R."/>
            <person name="Boursier L."/>
            <person name="Brans A."/>
            <person name="Braun M."/>
            <person name="Brignell S.C."/>
            <person name="Bron S."/>
            <person name="Brouillet S."/>
            <person name="Bruschi C.V."/>
            <person name="Caldwell B."/>
            <person name="Capuano V."/>
            <person name="Carter N.M."/>
            <person name="Choi S.-K."/>
            <person name="Codani J.-J."/>
            <person name="Connerton I.F."/>
            <person name="Cummings N.J."/>
            <person name="Daniel R.A."/>
            <person name="Denizot F."/>
            <person name="Devine K.M."/>
            <person name="Duesterhoeft A."/>
            <person name="Ehrlich S.D."/>
            <person name="Emmerson P.T."/>
            <person name="Entian K.-D."/>
            <person name="Errington J."/>
            <person name="Fabret C."/>
            <person name="Ferrari E."/>
            <person name="Foulger D."/>
            <person name="Fritz C."/>
            <person name="Fujita M."/>
            <person name="Fujita Y."/>
            <person name="Fuma S."/>
            <person name="Galizzi A."/>
            <person name="Galleron N."/>
            <person name="Ghim S.-Y."/>
            <person name="Glaser P."/>
            <person name="Goffeau A."/>
            <person name="Golightly E.J."/>
            <person name="Grandi G."/>
            <person name="Guiseppi G."/>
            <person name="Guy B.J."/>
            <person name="Haga K."/>
            <person name="Haiech J."/>
            <person name="Harwood C.R."/>
            <person name="Henaut A."/>
            <person name="Hilbert H."/>
            <person name="Holsappel S."/>
            <person name="Hosono S."/>
            <person name="Hullo M.-F."/>
            <person name="Itaya M."/>
            <person name="Jones L.-M."/>
            <person name="Joris B."/>
            <person name="Karamata D."/>
            <person name="Kasahara Y."/>
            <person name="Klaerr-Blanchard M."/>
            <person name="Klein C."/>
            <person name="Kobayashi Y."/>
            <person name="Koetter P."/>
            <person name="Koningstein G."/>
            <person name="Krogh S."/>
            <person name="Kumano M."/>
            <person name="Kurita K."/>
            <person name="Lapidus A."/>
            <person name="Lardinois S."/>
            <person name="Lauber J."/>
            <person name="Lazarevic V."/>
            <person name="Lee S.-M."/>
            <person name="Levine A."/>
            <person name="Liu H."/>
            <person name="Masuda S."/>
            <person name="Mauel C."/>
            <person name="Medigue C."/>
            <person name="Medina N."/>
            <person name="Mellado R.P."/>
            <person name="Mizuno M."/>
            <person name="Moestl D."/>
            <person name="Nakai S."/>
            <person name="Noback M."/>
            <person name="Noone D."/>
            <person name="O'Reilly M."/>
            <person name="Ogawa K."/>
            <person name="Ogiwara A."/>
            <person name="Oudega B."/>
            <person name="Park S.-H."/>
            <person name="Parro V."/>
            <person name="Pohl T.M."/>
            <person name="Portetelle D."/>
            <person name="Porwollik S."/>
            <person name="Prescott A.M."/>
            <person name="Presecan E."/>
            <person name="Pujic P."/>
            <person name="Purnelle B."/>
            <person name="Rapoport G."/>
            <person name="Rey M."/>
            <person name="Reynolds S."/>
            <person name="Rieger M."/>
            <person name="Rivolta C."/>
            <person name="Rocha E."/>
            <person name="Roche B."/>
            <person name="Rose M."/>
            <person name="Sadaie Y."/>
            <person name="Sato T."/>
            <person name="Scanlan E."/>
            <person name="Schleich S."/>
            <person name="Schroeter R."/>
            <person name="Scoffone F."/>
            <person name="Sekiguchi J."/>
            <person name="Sekowska A."/>
            <person name="Seror S.J."/>
            <person name="Serror P."/>
            <person name="Shin B.-S."/>
            <person name="Soldo B."/>
            <person name="Sorokin A."/>
            <person name="Tacconi E."/>
            <person name="Takagi T."/>
            <person name="Takahashi H."/>
            <person name="Takemaru K."/>
            <person name="Takeuchi M."/>
            <person name="Tamakoshi A."/>
            <person name="Tanaka T."/>
            <person name="Terpstra P."/>
            <person name="Tognoni A."/>
            <person name="Tosato V."/>
            <person name="Uchiyama S."/>
            <person name="Vandenbol M."/>
            <person name="Vannier F."/>
            <person name="Vassarotti A."/>
            <person name="Viari A."/>
            <person name="Wambutt R."/>
            <person name="Wedler E."/>
            <person name="Wedler H."/>
            <person name="Weitzenegger T."/>
            <person name="Winters P."/>
            <person name="Wipat A."/>
            <person name="Yamamoto H."/>
            <person name="Yamane K."/>
            <person name="Yasumoto K."/>
            <person name="Yata K."/>
            <person name="Yoshida K."/>
            <person name="Yoshikawa H.-F."/>
            <person name="Zumstein E."/>
            <person name="Yoshikawa H."/>
            <person name="Danchin A."/>
        </authorList>
    </citation>
    <scope>NUCLEOTIDE SEQUENCE [LARGE SCALE GENOMIC DNA]</scope>
    <source>
        <strain>168</strain>
    </source>
</reference>